<accession>Q09X25</accession>
<organism>
    <name type="scientific">Morus indica</name>
    <name type="common">Mulberry</name>
    <dbReference type="NCBI Taxonomy" id="248361"/>
    <lineage>
        <taxon>Eukaryota</taxon>
        <taxon>Viridiplantae</taxon>
        <taxon>Streptophyta</taxon>
        <taxon>Embryophyta</taxon>
        <taxon>Tracheophyta</taxon>
        <taxon>Spermatophyta</taxon>
        <taxon>Magnoliopsida</taxon>
        <taxon>eudicotyledons</taxon>
        <taxon>Gunneridae</taxon>
        <taxon>Pentapetalae</taxon>
        <taxon>rosids</taxon>
        <taxon>fabids</taxon>
        <taxon>Rosales</taxon>
        <taxon>Moraceae</taxon>
        <taxon>Moreae</taxon>
        <taxon>Morus</taxon>
    </lineage>
</organism>
<comment type="function">
    <text evidence="1">DNA-dependent RNA polymerase catalyzes the transcription of DNA into RNA using the four ribonucleoside triphosphates as substrates.</text>
</comment>
<comment type="catalytic activity">
    <reaction evidence="1">
        <text>RNA(n) + a ribonucleoside 5'-triphosphate = RNA(n+1) + diphosphate</text>
        <dbReference type="Rhea" id="RHEA:21248"/>
        <dbReference type="Rhea" id="RHEA-COMP:14527"/>
        <dbReference type="Rhea" id="RHEA-COMP:17342"/>
        <dbReference type="ChEBI" id="CHEBI:33019"/>
        <dbReference type="ChEBI" id="CHEBI:61557"/>
        <dbReference type="ChEBI" id="CHEBI:140395"/>
        <dbReference type="EC" id="2.7.7.6"/>
    </reaction>
</comment>
<comment type="subunit">
    <text evidence="1">In plastids the minimal PEP RNA polymerase catalytic core is composed of four subunits: alpha, beta, beta', and beta''. When a (nuclear-encoded) sigma factor is associated with the core the holoenzyme is formed, which can initiate transcription.</text>
</comment>
<comment type="subcellular location">
    <subcellularLocation>
        <location>Plastid</location>
        <location>Chloroplast</location>
    </subcellularLocation>
</comment>
<comment type="similarity">
    <text evidence="1">Belongs to the RNA polymerase beta chain family.</text>
</comment>
<evidence type="ECO:0000255" key="1">
    <source>
        <dbReference type="HAMAP-Rule" id="MF_01321"/>
    </source>
</evidence>
<name>RPOB_MORIN</name>
<dbReference type="EC" id="2.7.7.6" evidence="1"/>
<dbReference type="EMBL" id="DQ226511">
    <property type="protein sequence ID" value="ABB20950.1"/>
    <property type="molecule type" value="Genomic_DNA"/>
</dbReference>
<dbReference type="RefSeq" id="YP_762253.1">
    <property type="nucleotide sequence ID" value="NC_008359.1"/>
</dbReference>
<dbReference type="SMR" id="Q09X25"/>
<dbReference type="GeneID" id="4290596"/>
<dbReference type="GO" id="GO:0009507">
    <property type="term" value="C:chloroplast"/>
    <property type="evidence" value="ECO:0007669"/>
    <property type="project" value="UniProtKB-SubCell"/>
</dbReference>
<dbReference type="GO" id="GO:0000428">
    <property type="term" value="C:DNA-directed RNA polymerase complex"/>
    <property type="evidence" value="ECO:0007669"/>
    <property type="project" value="UniProtKB-KW"/>
</dbReference>
<dbReference type="GO" id="GO:0005739">
    <property type="term" value="C:mitochondrion"/>
    <property type="evidence" value="ECO:0007669"/>
    <property type="project" value="GOC"/>
</dbReference>
<dbReference type="GO" id="GO:0003677">
    <property type="term" value="F:DNA binding"/>
    <property type="evidence" value="ECO:0007669"/>
    <property type="project" value="UniProtKB-UniRule"/>
</dbReference>
<dbReference type="GO" id="GO:0003899">
    <property type="term" value="F:DNA-directed RNA polymerase activity"/>
    <property type="evidence" value="ECO:0007669"/>
    <property type="project" value="UniProtKB-UniRule"/>
</dbReference>
<dbReference type="GO" id="GO:0032549">
    <property type="term" value="F:ribonucleoside binding"/>
    <property type="evidence" value="ECO:0007669"/>
    <property type="project" value="InterPro"/>
</dbReference>
<dbReference type="GO" id="GO:0006351">
    <property type="term" value="P:DNA-templated transcription"/>
    <property type="evidence" value="ECO:0007669"/>
    <property type="project" value="UniProtKB-UniRule"/>
</dbReference>
<dbReference type="CDD" id="cd00653">
    <property type="entry name" value="RNA_pol_B_RPB2"/>
    <property type="match status" value="1"/>
</dbReference>
<dbReference type="FunFam" id="3.90.1110.10:FF:000009">
    <property type="entry name" value="DNA-directed RNA polymerase subunit beta"/>
    <property type="match status" value="1"/>
</dbReference>
<dbReference type="Gene3D" id="2.40.50.100">
    <property type="match status" value="1"/>
</dbReference>
<dbReference type="Gene3D" id="2.40.50.150">
    <property type="match status" value="1"/>
</dbReference>
<dbReference type="Gene3D" id="3.90.1100.10">
    <property type="match status" value="1"/>
</dbReference>
<dbReference type="Gene3D" id="2.30.150.10">
    <property type="entry name" value="DNA-directed RNA polymerase, beta subunit, external 1 domain"/>
    <property type="match status" value="1"/>
</dbReference>
<dbReference type="Gene3D" id="2.40.270.10">
    <property type="entry name" value="DNA-directed RNA polymerase, subunit 2, domain 6"/>
    <property type="match status" value="2"/>
</dbReference>
<dbReference type="Gene3D" id="3.90.1800.10">
    <property type="entry name" value="RNA polymerase alpha subunit dimerisation domain"/>
    <property type="match status" value="1"/>
</dbReference>
<dbReference type="Gene3D" id="3.90.1110.10">
    <property type="entry name" value="RNA polymerase Rpb2, domain 2"/>
    <property type="match status" value="1"/>
</dbReference>
<dbReference type="HAMAP" id="MF_01321">
    <property type="entry name" value="RNApol_bact_RpoB"/>
    <property type="match status" value="1"/>
</dbReference>
<dbReference type="InterPro" id="IPR042107">
    <property type="entry name" value="DNA-dir_RNA_pol_bsu_ext_1_sf"/>
</dbReference>
<dbReference type="InterPro" id="IPR015712">
    <property type="entry name" value="DNA-dir_RNA_pol_su2"/>
</dbReference>
<dbReference type="InterPro" id="IPR007120">
    <property type="entry name" value="DNA-dir_RNAP_su2_dom"/>
</dbReference>
<dbReference type="InterPro" id="IPR037033">
    <property type="entry name" value="DNA-dir_RNAP_su2_hyb_sf"/>
</dbReference>
<dbReference type="InterPro" id="IPR010243">
    <property type="entry name" value="RNA_pol_bsu_bac"/>
</dbReference>
<dbReference type="InterPro" id="IPR007121">
    <property type="entry name" value="RNA_pol_bsu_CS"/>
</dbReference>
<dbReference type="InterPro" id="IPR007642">
    <property type="entry name" value="RNA_pol_Rpb2_2"/>
</dbReference>
<dbReference type="InterPro" id="IPR037034">
    <property type="entry name" value="RNA_pol_Rpb2_2_sf"/>
</dbReference>
<dbReference type="InterPro" id="IPR007645">
    <property type="entry name" value="RNA_pol_Rpb2_3"/>
</dbReference>
<dbReference type="InterPro" id="IPR007641">
    <property type="entry name" value="RNA_pol_Rpb2_7"/>
</dbReference>
<dbReference type="InterPro" id="IPR014724">
    <property type="entry name" value="RNA_pol_RPB2_OB-fold"/>
</dbReference>
<dbReference type="NCBIfam" id="NF001616">
    <property type="entry name" value="PRK00405.1"/>
    <property type="match status" value="1"/>
</dbReference>
<dbReference type="PANTHER" id="PTHR20856">
    <property type="entry name" value="DNA-DIRECTED RNA POLYMERASE I SUBUNIT 2"/>
    <property type="match status" value="1"/>
</dbReference>
<dbReference type="Pfam" id="PF04561">
    <property type="entry name" value="RNA_pol_Rpb2_2"/>
    <property type="match status" value="1"/>
</dbReference>
<dbReference type="Pfam" id="PF04565">
    <property type="entry name" value="RNA_pol_Rpb2_3"/>
    <property type="match status" value="1"/>
</dbReference>
<dbReference type="Pfam" id="PF00562">
    <property type="entry name" value="RNA_pol_Rpb2_6"/>
    <property type="match status" value="1"/>
</dbReference>
<dbReference type="Pfam" id="PF04560">
    <property type="entry name" value="RNA_pol_Rpb2_7"/>
    <property type="match status" value="1"/>
</dbReference>
<dbReference type="SUPFAM" id="SSF64484">
    <property type="entry name" value="beta and beta-prime subunits of DNA dependent RNA-polymerase"/>
    <property type="match status" value="1"/>
</dbReference>
<dbReference type="PROSITE" id="PS01166">
    <property type="entry name" value="RNA_POL_BETA"/>
    <property type="match status" value="1"/>
</dbReference>
<keyword id="KW-0150">Chloroplast</keyword>
<keyword id="KW-0240">DNA-directed RNA polymerase</keyword>
<keyword id="KW-0548">Nucleotidyltransferase</keyword>
<keyword id="KW-0934">Plastid</keyword>
<keyword id="KW-0804">Transcription</keyword>
<keyword id="KW-0808">Transferase</keyword>
<reference key="1">
    <citation type="submission" date="2005-09" db="EMBL/GenBank/DDBJ databases">
        <title>The chloroplast genome of mulberry: structural features and comparative analysis.</title>
        <authorList>
            <person name="Ravi V."/>
            <person name="Khurana J.P."/>
            <person name="Tyagi A.K."/>
            <person name="Khurana P."/>
        </authorList>
    </citation>
    <scope>NUCLEOTIDE SEQUENCE [LARGE SCALE GENOMIC DNA]</scope>
    <source>
        <strain>cv. K2</strain>
    </source>
</reference>
<gene>
    <name evidence="1" type="primary">rpoB</name>
    <name type="ordered locus">MoinCp013</name>
</gene>
<geneLocation type="chloroplast"/>
<feature type="chain" id="PRO_0000276592" description="DNA-directed RNA polymerase subunit beta">
    <location>
        <begin position="1"/>
        <end position="1070"/>
    </location>
</feature>
<proteinExistence type="inferred from homology"/>
<protein>
    <recommendedName>
        <fullName evidence="1">DNA-directed RNA polymerase subunit beta</fullName>
        <ecNumber evidence="1">2.7.7.6</ecNumber>
    </recommendedName>
    <alternativeName>
        <fullName evidence="1">PEP</fullName>
    </alternativeName>
    <alternativeName>
        <fullName evidence="1">Plastid-encoded RNA polymerase subunit beta</fullName>
        <shortName evidence="1">RNA polymerase subunit beta</shortName>
    </alternativeName>
</protein>
<sequence length="1070" mass="121066">MLEGGNEEISTIPGFNQIQFEGFCRFIDQGLTEELYKFPKIEDTDQEIEFQLFVETYQLVEPLIKERDAVYESLTYSSELYVSAGLIWKTSRDMQEQTIFIGNIPLMNSLGTSIVNGIYRIVINQILQSPGIYYRSELDHNGISVYTGTIISDWGGRLELEIDRKARIWARVSRKQKISILVLLSAMGLNLREILENVCYPEIFLSFLKDKEKKKIKSKENAILEFYQQFACVGGDPVFSESLCKELQKKFFQQRCELGRIGRRNMNRRLNLDIPQNTTFLLPRDILAAADHLIGMKFGMGILDDMNHLKNKRIRSVADLLQDQFGLALVRLENMVRGTMCGAIRHKLIPTPQNLVTSTTLTTTYESFFGLHPLSQVLDRTNPLTQIVHGRKASYLGPGGLTGRTASFRIRDIHPSHYGRICPIDTSEGINVGLIGSLAIHARIGHWGSLESPFYEISERSKKVRMLYLSPSIDEYYMVAAGNSLALNRGSQEEQVVPARYRQEFLTIEWEQVHLRSIFPFQYFSIGASLIPFIEHNDANRALMSSNMQRQAVPLSRSEKCIVGTGLECQVALDSGVPTIAEHQGKIIYTDTEKIILSGNRDTLSIPLVIYQRSNKNTCMHQKPQVSRGKCIKKGQILADGAATVGGELALGKNVLVAYMPWEGYNSEDAVLINERLVYEDIYTSFHIRKYEIHTHVTSHGPERITNEIPHLEAHLLRNLDKNGIVMLGSWVETGDILVGKLTPQMAKESSYAPEDRLLRAILGIQISISKETCLKLPIGGRGRVIDVRWIQKKGGSSYNPETIRVYISQKREIKVGDKVAGRHGNKGIVSKILPRQDMPYLQDGRPVDMVFNPLGVPSRMNVGQIFECSLGLAGGLLDRHYRIAPFDERYEQEASRKLVFSELYEASKQTANPWVFEPEYPGKSRIFDGRTGDPFEQPVIIGKPYILKLIHQVDDKIHGRCSGHYALVTQQPLRGRAKQGGQRVGEMEVWALEGFGVAHILQEMLTYKSDHIRARQEVLGTTMVGGPIPKPEDAPESFRLLVRELRSLALELNHFLVSEKNFQINRKDV</sequence>